<sequence length="122" mass="14259">MTAASRQEVLGLYRSFFRLARKWQAASGQMEDTIKEKQYILNEARTLFQKNKNLTDPDLIKQCIDECTARIEIGLHYQIPYPRPIHLPPMGLTPRRGRGLQTQEKLRKFSKPLYLKSHDEVS</sequence>
<organism>
    <name type="scientific">Rattus norvegicus</name>
    <name type="common">Rat</name>
    <dbReference type="NCBI Taxonomy" id="10116"/>
    <lineage>
        <taxon>Eukaryota</taxon>
        <taxon>Metazoa</taxon>
        <taxon>Chordata</taxon>
        <taxon>Craniata</taxon>
        <taxon>Vertebrata</taxon>
        <taxon>Euteleostomi</taxon>
        <taxon>Mammalia</taxon>
        <taxon>Eutheria</taxon>
        <taxon>Euarchontoglires</taxon>
        <taxon>Glires</taxon>
        <taxon>Rodentia</taxon>
        <taxon>Myomorpha</taxon>
        <taxon>Muroidea</taxon>
        <taxon>Muridae</taxon>
        <taxon>Murinae</taxon>
        <taxon>Rattus</taxon>
    </lineage>
</organism>
<reference key="1">
    <citation type="journal article" date="2004" name="Genome Res.">
        <title>The status, quality, and expansion of the NIH full-length cDNA project: the Mammalian Gene Collection (MGC).</title>
        <authorList>
            <consortium name="The MGC Project Team"/>
        </authorList>
    </citation>
    <scope>NUCLEOTIDE SEQUENCE [LARGE SCALE MRNA]</scope>
    <source>
        <tissue>Pituitary</tissue>
    </source>
</reference>
<feature type="chain" id="PRO_0000370325" description="LYR motif-containing protein 1">
    <location>
        <begin position="1"/>
        <end position="122"/>
    </location>
</feature>
<accession>B2RYU8</accession>
<gene>
    <name type="primary">Lyrm1</name>
</gene>
<protein>
    <recommendedName>
        <fullName>LYR motif-containing protein 1</fullName>
    </recommendedName>
</protein>
<keyword id="KW-1185">Reference proteome</keyword>
<dbReference type="EMBL" id="BC166909">
    <property type="protein sequence ID" value="AAI66909.1"/>
    <property type="molecule type" value="mRNA"/>
</dbReference>
<dbReference type="SMR" id="B2RYU8"/>
<dbReference type="FunCoup" id="B2RYU8">
    <property type="interactions" value="345"/>
</dbReference>
<dbReference type="STRING" id="10116.ENSRNOP00000035782"/>
<dbReference type="PhosphoSitePlus" id="B2RYU8"/>
<dbReference type="PaxDb" id="10116-ENSRNOP00000035782"/>
<dbReference type="PeptideAtlas" id="B2RYU8"/>
<dbReference type="UCSC" id="RGD:1563498">
    <property type="organism name" value="rat"/>
</dbReference>
<dbReference type="AGR" id="RGD:1563498"/>
<dbReference type="RGD" id="1563498">
    <property type="gene designation" value="Lyrm1"/>
</dbReference>
<dbReference type="eggNOG" id="ENOG502S0XV">
    <property type="taxonomic scope" value="Eukaryota"/>
</dbReference>
<dbReference type="InParanoid" id="B2RYU8"/>
<dbReference type="PhylomeDB" id="B2RYU8"/>
<dbReference type="PRO" id="PR:B2RYU8"/>
<dbReference type="Proteomes" id="UP000002494">
    <property type="component" value="Unplaced"/>
</dbReference>
<dbReference type="CDD" id="cd20261">
    <property type="entry name" value="Complex1_LYR_LYRM1"/>
    <property type="match status" value="1"/>
</dbReference>
<dbReference type="InterPro" id="IPR008011">
    <property type="entry name" value="Complex1_LYR_dom"/>
</dbReference>
<dbReference type="InterPro" id="IPR045294">
    <property type="entry name" value="Complex1_LYR_LYRM1"/>
</dbReference>
<dbReference type="InterPro" id="IPR040330">
    <property type="entry name" value="LYRM1"/>
</dbReference>
<dbReference type="PANTHER" id="PTHR14273">
    <property type="entry name" value="LYR MOTIF-CONTAINING PROTEIN 1"/>
    <property type="match status" value="1"/>
</dbReference>
<dbReference type="PANTHER" id="PTHR14273:SF0">
    <property type="entry name" value="LYR MOTIF-CONTAINING PROTEIN 1"/>
    <property type="match status" value="1"/>
</dbReference>
<dbReference type="Pfam" id="PF05347">
    <property type="entry name" value="Complex1_LYR"/>
    <property type="match status" value="1"/>
</dbReference>
<name>LYRM1_RAT</name>
<proteinExistence type="evidence at transcript level"/>
<evidence type="ECO:0000250" key="1"/>
<evidence type="ECO:0000305" key="2"/>
<comment type="function">
    <text evidence="1">May promote cell proliferation and inhibition of apoptosis of preadipocytes.</text>
</comment>
<comment type="similarity">
    <text evidence="2">Belongs to the complex I LYR family.</text>
</comment>